<proteinExistence type="inferred from homology"/>
<name>MNME_CYACA</name>
<dbReference type="EC" id="3.6.-.-" evidence="1"/>
<dbReference type="EMBL" id="AF022186">
    <property type="protein sequence ID" value="AAF12952.1"/>
    <property type="molecule type" value="Genomic_DNA"/>
</dbReference>
<dbReference type="RefSeq" id="NP_045142.1">
    <property type="nucleotide sequence ID" value="NC_001840.1"/>
</dbReference>
<dbReference type="SMR" id="Q9TLX6"/>
<dbReference type="GeneID" id="800118"/>
<dbReference type="GO" id="GO:0009507">
    <property type="term" value="C:chloroplast"/>
    <property type="evidence" value="ECO:0007669"/>
    <property type="project" value="UniProtKB-SubCell"/>
</dbReference>
<dbReference type="GO" id="GO:0005829">
    <property type="term" value="C:cytosol"/>
    <property type="evidence" value="ECO:0007669"/>
    <property type="project" value="TreeGrafter"/>
</dbReference>
<dbReference type="GO" id="GO:0005525">
    <property type="term" value="F:GTP binding"/>
    <property type="evidence" value="ECO:0007669"/>
    <property type="project" value="UniProtKB-UniRule"/>
</dbReference>
<dbReference type="GO" id="GO:0003924">
    <property type="term" value="F:GTPase activity"/>
    <property type="evidence" value="ECO:0007669"/>
    <property type="project" value="UniProtKB-UniRule"/>
</dbReference>
<dbReference type="GO" id="GO:0046872">
    <property type="term" value="F:metal ion binding"/>
    <property type="evidence" value="ECO:0007669"/>
    <property type="project" value="UniProtKB-KW"/>
</dbReference>
<dbReference type="GO" id="GO:0030488">
    <property type="term" value="P:tRNA methylation"/>
    <property type="evidence" value="ECO:0007669"/>
    <property type="project" value="TreeGrafter"/>
</dbReference>
<dbReference type="GO" id="GO:0002098">
    <property type="term" value="P:tRNA wobble uridine modification"/>
    <property type="evidence" value="ECO:0007669"/>
    <property type="project" value="TreeGrafter"/>
</dbReference>
<dbReference type="CDD" id="cd04164">
    <property type="entry name" value="trmE"/>
    <property type="match status" value="1"/>
</dbReference>
<dbReference type="CDD" id="cd14858">
    <property type="entry name" value="TrmE_N"/>
    <property type="match status" value="1"/>
</dbReference>
<dbReference type="FunFam" id="3.30.1360.120:FF:000003">
    <property type="entry name" value="tRNA modification GTPase MnmE"/>
    <property type="match status" value="1"/>
</dbReference>
<dbReference type="Gene3D" id="3.40.50.300">
    <property type="entry name" value="P-loop containing nucleotide triphosphate hydrolases"/>
    <property type="match status" value="1"/>
</dbReference>
<dbReference type="Gene3D" id="3.30.1360.120">
    <property type="entry name" value="Probable tRNA modification gtpase trme, domain 1"/>
    <property type="match status" value="1"/>
</dbReference>
<dbReference type="Gene3D" id="1.20.120.430">
    <property type="entry name" value="tRNA modification GTPase MnmE domain 2"/>
    <property type="match status" value="1"/>
</dbReference>
<dbReference type="HAMAP" id="MF_00379">
    <property type="entry name" value="GTPase_MnmE"/>
    <property type="match status" value="1"/>
</dbReference>
<dbReference type="InterPro" id="IPR031168">
    <property type="entry name" value="G_TrmE"/>
</dbReference>
<dbReference type="InterPro" id="IPR006073">
    <property type="entry name" value="GTP-bd"/>
</dbReference>
<dbReference type="InterPro" id="IPR018948">
    <property type="entry name" value="GTP-bd_TrmE_N"/>
</dbReference>
<dbReference type="InterPro" id="IPR004520">
    <property type="entry name" value="GTPase_MnmE"/>
</dbReference>
<dbReference type="InterPro" id="IPR027368">
    <property type="entry name" value="MnmE_dom2"/>
</dbReference>
<dbReference type="InterPro" id="IPR025867">
    <property type="entry name" value="MnmE_helical"/>
</dbReference>
<dbReference type="InterPro" id="IPR027417">
    <property type="entry name" value="P-loop_NTPase"/>
</dbReference>
<dbReference type="InterPro" id="IPR005225">
    <property type="entry name" value="Small_GTP-bd"/>
</dbReference>
<dbReference type="InterPro" id="IPR027266">
    <property type="entry name" value="TrmE/GcvT_dom1"/>
</dbReference>
<dbReference type="NCBIfam" id="TIGR00450">
    <property type="entry name" value="mnmE_trmE_thdF"/>
    <property type="match status" value="1"/>
</dbReference>
<dbReference type="NCBIfam" id="TIGR00231">
    <property type="entry name" value="small_GTP"/>
    <property type="match status" value="1"/>
</dbReference>
<dbReference type="PANTHER" id="PTHR42714">
    <property type="entry name" value="TRNA MODIFICATION GTPASE GTPBP3"/>
    <property type="match status" value="1"/>
</dbReference>
<dbReference type="PANTHER" id="PTHR42714:SF2">
    <property type="entry name" value="TRNA MODIFICATION GTPASE GTPBP3, MITOCHONDRIAL"/>
    <property type="match status" value="1"/>
</dbReference>
<dbReference type="Pfam" id="PF01926">
    <property type="entry name" value="MMR_HSR1"/>
    <property type="match status" value="1"/>
</dbReference>
<dbReference type="Pfam" id="PF12631">
    <property type="entry name" value="MnmE_helical"/>
    <property type="match status" value="1"/>
</dbReference>
<dbReference type="Pfam" id="PF10396">
    <property type="entry name" value="TrmE_N"/>
    <property type="match status" value="1"/>
</dbReference>
<dbReference type="SUPFAM" id="SSF52540">
    <property type="entry name" value="P-loop containing nucleoside triphosphate hydrolases"/>
    <property type="match status" value="1"/>
</dbReference>
<dbReference type="PROSITE" id="PS51709">
    <property type="entry name" value="G_TRME"/>
    <property type="match status" value="1"/>
</dbReference>
<keyword id="KW-0150">Chloroplast</keyword>
<keyword id="KW-0342">GTP-binding</keyword>
<keyword id="KW-0378">Hydrolase</keyword>
<keyword id="KW-0460">Magnesium</keyword>
<keyword id="KW-0479">Metal-binding</keyword>
<keyword id="KW-0547">Nucleotide-binding</keyword>
<keyword id="KW-0934">Plastid</keyword>
<keyword id="KW-0630">Potassium</keyword>
<keyword id="KW-0819">tRNA processing</keyword>
<feature type="chain" id="PRO_0000188953" description="Probable tRNA modification GTPase MnmE">
    <location>
        <begin position="1"/>
        <end position="465"/>
    </location>
</feature>
<feature type="domain" description="TrmE-type G">
    <location>
        <begin position="221"/>
        <end position="384"/>
    </location>
</feature>
<feature type="binding site" evidence="1">
    <location>
        <position position="23"/>
    </location>
    <ligand>
        <name>(6S)-5-formyl-5,6,7,8-tetrahydrofolate</name>
        <dbReference type="ChEBI" id="CHEBI:57457"/>
    </ligand>
</feature>
<feature type="binding site" evidence="1">
    <location>
        <position position="85"/>
    </location>
    <ligand>
        <name>(6S)-5-formyl-5,6,7,8-tetrahydrofolate</name>
        <dbReference type="ChEBI" id="CHEBI:57457"/>
    </ligand>
</feature>
<feature type="binding site" evidence="1">
    <location>
        <position position="124"/>
    </location>
    <ligand>
        <name>(6S)-5-formyl-5,6,7,8-tetrahydrofolate</name>
        <dbReference type="ChEBI" id="CHEBI:57457"/>
    </ligand>
</feature>
<feature type="binding site" evidence="1">
    <location>
        <begin position="231"/>
        <end position="236"/>
    </location>
    <ligand>
        <name>GTP</name>
        <dbReference type="ChEBI" id="CHEBI:37565"/>
    </ligand>
</feature>
<feature type="binding site" evidence="1">
    <location>
        <position position="235"/>
    </location>
    <ligand>
        <name>Mg(2+)</name>
        <dbReference type="ChEBI" id="CHEBI:18420"/>
    </ligand>
</feature>
<feature type="binding site" evidence="1">
    <location>
        <begin position="250"/>
        <end position="256"/>
    </location>
    <ligand>
        <name>GTP</name>
        <dbReference type="ChEBI" id="CHEBI:37565"/>
    </ligand>
</feature>
<feature type="binding site" evidence="1">
    <location>
        <position position="256"/>
    </location>
    <ligand>
        <name>Mg(2+)</name>
        <dbReference type="ChEBI" id="CHEBI:18420"/>
    </ligand>
</feature>
<feature type="binding site" evidence="1">
    <location>
        <begin position="275"/>
        <end position="278"/>
    </location>
    <ligand>
        <name>GTP</name>
        <dbReference type="ChEBI" id="CHEBI:37565"/>
    </ligand>
</feature>
<feature type="binding site" evidence="1">
    <location>
        <position position="465"/>
    </location>
    <ligand>
        <name>(6S)-5-formyl-5,6,7,8-tetrahydrofolate</name>
        <dbReference type="ChEBI" id="CHEBI:57457"/>
    </ligand>
</feature>
<gene>
    <name evidence="1" type="primary">mnmE</name>
    <name evidence="1" type="synonym">thdF</name>
    <name evidence="1" type="synonym">trmE</name>
</gene>
<evidence type="ECO:0000255" key="1">
    <source>
        <dbReference type="HAMAP-Rule" id="MF_00379"/>
    </source>
</evidence>
<organism>
    <name type="scientific">Cyanidium caldarium</name>
    <name type="common">Red alga</name>
    <dbReference type="NCBI Taxonomy" id="2771"/>
    <lineage>
        <taxon>Eukaryota</taxon>
        <taxon>Rhodophyta</taxon>
        <taxon>Bangiophyceae</taxon>
        <taxon>Cyanidiales</taxon>
        <taxon>Cyanidiaceae</taxon>
        <taxon>Cyanidium</taxon>
    </lineage>
</organism>
<reference key="1">
    <citation type="journal article" date="2000" name="J. Mol. Evol.">
        <title>The structure and gene repertoire of an ancient red algal plastid genome.</title>
        <authorList>
            <person name="Gloeckner G."/>
            <person name="Rosenthal A."/>
            <person name="Valentin K.-U."/>
        </authorList>
    </citation>
    <scope>NUCLEOTIDE SEQUENCE [LARGE SCALE GENOMIC DNA]</scope>
    <source>
        <strain>RK-1</strain>
    </source>
</reference>
<sequence length="465" mass="52004">MYKRDTIAAIATCPNGGGVSILRLSGSKSIDVVKTVSLVSSNQCWHSHCILYGWIKDNEDQSFVDEVLILLMMAPRSYTAENVVEIHCHASIVLANEILRILVKQGVRLAKPGEFTMRAFLNGRIGLSQVESVLKVIHSKTIASAKLAANTLRRGGSERIRRLKHTLSLLLADLEFHIDFSDEFIDVDSIEDELRSTIQSSLLDIKDLISSYNKVSKLNEGTKVCIIGKPNVGKSSLLNAIAKRECSIVTNFPGTTRDIVSFETMLGNTLVRLYDTAGIRQSVDEIEKIGISKTELFVDECQIVFFVLDAIQGLSSEDSVIFNKLNLMNKNFVILINKIDKKVQRKIDEIYETLKCSNRRIIEVSAIKNIGLEKLNNCILDLSSKEDFDLPVHFSVNCKYLEILNNIYLILDELYTGSLNKSVTSYDFIAVELRRVLQGLNQITGDEVVENNVLDAIFSKFCVGK</sequence>
<geneLocation type="chloroplast"/>
<accession>Q9TLX6</accession>
<protein>
    <recommendedName>
        <fullName evidence="1">Probable tRNA modification GTPase MnmE</fullName>
        <ecNumber evidence="1">3.6.-.-</ecNumber>
    </recommendedName>
</protein>
<comment type="function">
    <text evidence="1">Exhibits a very high intrinsic GTPase hydrolysis rate. Involved in the addition of a carboxymethylaminomethyl (cmnm) group at the wobble position (U34) of certain tRNAs, forming tRNA-cmnm(5)s(2)U34.</text>
</comment>
<comment type="cofactor">
    <cofactor evidence="1">
        <name>K(+)</name>
        <dbReference type="ChEBI" id="CHEBI:29103"/>
    </cofactor>
    <text evidence="1">Binds 1 potassium ion per subunit.</text>
</comment>
<comment type="subcellular location">
    <subcellularLocation>
        <location>Plastid</location>
        <location>Chloroplast</location>
    </subcellularLocation>
</comment>
<comment type="similarity">
    <text evidence="1">Belongs to the TRAFAC class TrmE-Era-EngA-EngB-Septin-like GTPase superfamily. TrmE GTPase family.</text>
</comment>